<feature type="chain" id="PRO_0000168839" description="Inner membrane protein YcfZ">
    <location>
        <begin position="1"/>
        <end position="262"/>
    </location>
</feature>
<feature type="topological domain" description="Cytoplasmic" evidence="1">
    <location>
        <begin position="1"/>
        <end position="4"/>
    </location>
</feature>
<feature type="transmembrane region" description="Helical" evidence="1">
    <location>
        <begin position="5"/>
        <end position="27"/>
    </location>
</feature>
<feature type="topological domain" description="Periplasmic" evidence="1">
    <location>
        <begin position="28"/>
        <end position="182"/>
    </location>
</feature>
<feature type="transmembrane region" description="Helical" evidence="1">
    <location>
        <begin position="183"/>
        <end position="202"/>
    </location>
</feature>
<feature type="topological domain" description="Cytoplasmic" evidence="1">
    <location>
        <begin position="203"/>
        <end position="206"/>
    </location>
</feature>
<feature type="transmembrane region" description="Helical" evidence="1">
    <location>
        <begin position="207"/>
        <end position="229"/>
    </location>
</feature>
<feature type="topological domain" description="Periplasmic" evidence="1">
    <location>
        <begin position="230"/>
        <end position="238"/>
    </location>
</feature>
<feature type="transmembrane region" description="Helical" evidence="1">
    <location>
        <begin position="239"/>
        <end position="258"/>
    </location>
</feature>
<feature type="topological domain" description="Cytoplasmic" evidence="1">
    <location>
        <begin position="259"/>
        <end position="262"/>
    </location>
</feature>
<proteinExistence type="evidence at protein level"/>
<gene>
    <name type="primary">ycfZ</name>
    <name type="ordered locus">b1121</name>
    <name type="ordered locus">JW1107</name>
</gene>
<accession>P75961</accession>
<evidence type="ECO:0000255" key="1"/>
<name>YCFZ_ECOLI</name>
<organism>
    <name type="scientific">Escherichia coli (strain K12)</name>
    <dbReference type="NCBI Taxonomy" id="83333"/>
    <lineage>
        <taxon>Bacteria</taxon>
        <taxon>Pseudomonadati</taxon>
        <taxon>Pseudomonadota</taxon>
        <taxon>Gammaproteobacteria</taxon>
        <taxon>Enterobacterales</taxon>
        <taxon>Enterobacteriaceae</taxon>
        <taxon>Escherichia</taxon>
    </lineage>
</organism>
<keyword id="KW-0997">Cell inner membrane</keyword>
<keyword id="KW-1003">Cell membrane</keyword>
<keyword id="KW-0472">Membrane</keyword>
<keyword id="KW-1185">Reference proteome</keyword>
<keyword id="KW-0812">Transmembrane</keyword>
<keyword id="KW-1133">Transmembrane helix</keyword>
<dbReference type="EMBL" id="U00096">
    <property type="protein sequence ID" value="AAC74205.1"/>
    <property type="molecule type" value="Genomic_DNA"/>
</dbReference>
<dbReference type="EMBL" id="AP009048">
    <property type="protein sequence ID" value="BAA35941.1"/>
    <property type="molecule type" value="Genomic_DNA"/>
</dbReference>
<dbReference type="PIR" id="F64856">
    <property type="entry name" value="F64856"/>
</dbReference>
<dbReference type="RefSeq" id="NP_415639.1">
    <property type="nucleotide sequence ID" value="NC_000913.3"/>
</dbReference>
<dbReference type="RefSeq" id="WP_000713462.1">
    <property type="nucleotide sequence ID" value="NZ_SSZK01000019.1"/>
</dbReference>
<dbReference type="SMR" id="P75961"/>
<dbReference type="DIP" id="DIP-11549N"/>
<dbReference type="FunCoup" id="P75961">
    <property type="interactions" value="13"/>
</dbReference>
<dbReference type="IntAct" id="P75961">
    <property type="interactions" value="1"/>
</dbReference>
<dbReference type="STRING" id="511145.b1121"/>
<dbReference type="PaxDb" id="511145-b1121"/>
<dbReference type="EnsemblBacteria" id="AAC74205">
    <property type="protein sequence ID" value="AAC74205"/>
    <property type="gene ID" value="b1121"/>
</dbReference>
<dbReference type="GeneID" id="945685"/>
<dbReference type="KEGG" id="ecj:JW1107"/>
<dbReference type="KEGG" id="eco:b1121"/>
<dbReference type="KEGG" id="ecoc:C3026_06750"/>
<dbReference type="PATRIC" id="fig|1411691.4.peg.1146"/>
<dbReference type="EchoBASE" id="EB3218"/>
<dbReference type="eggNOG" id="COG1512">
    <property type="taxonomic scope" value="Bacteria"/>
</dbReference>
<dbReference type="HOGENOM" id="CLU_096757_0_0_6"/>
<dbReference type="InParanoid" id="P75961"/>
<dbReference type="OMA" id="VENHTHA"/>
<dbReference type="OrthoDB" id="6572392at2"/>
<dbReference type="BioCyc" id="EcoCyc:G6578-MONOMER"/>
<dbReference type="PRO" id="PR:P75961"/>
<dbReference type="Proteomes" id="UP000000625">
    <property type="component" value="Chromosome"/>
</dbReference>
<dbReference type="GO" id="GO:0005886">
    <property type="term" value="C:plasma membrane"/>
    <property type="evidence" value="ECO:0000314"/>
    <property type="project" value="EcoCyc"/>
</dbReference>
<dbReference type="Gene3D" id="3.10.310.50">
    <property type="match status" value="1"/>
</dbReference>
<dbReference type="InterPro" id="IPR007621">
    <property type="entry name" value="TPM_dom"/>
</dbReference>
<dbReference type="Pfam" id="PF04536">
    <property type="entry name" value="TPM_phosphatase"/>
    <property type="match status" value="1"/>
</dbReference>
<comment type="subcellular location">
    <subcellularLocation>
        <location>Cell inner membrane</location>
        <topology>Multi-pass membrane protein</topology>
    </subcellularLocation>
</comment>
<sequence>MKKFIILLSLLILLPLTAASKPLIPIMKTLFTDVTGTVPDAEEIAHKAELFRQQTGIAPFIVVLPDINNEASLRQNGKAMLAHASSSLSDVKGSVLLLFTTREPRLIMITNGQVESGLDDKHLGLLIENHTLAYLNADLWYQGINNALAVLQAQILKQSTPPLTYYPHPGQQHENAPPGSTNTLGFIAWAATFILFSRIFYYTTRFIYALKFAVAMTIANMGYQALCLYIDNSFAITRISPLWAGLIGVCTFIAALLLTSKR</sequence>
<reference key="1">
    <citation type="journal article" date="1996" name="DNA Res.">
        <title>A 718-kb DNA sequence of the Escherichia coli K-12 genome corresponding to the 12.7-28.0 min region on the linkage map.</title>
        <authorList>
            <person name="Oshima T."/>
            <person name="Aiba H."/>
            <person name="Baba T."/>
            <person name="Fujita K."/>
            <person name="Hayashi K."/>
            <person name="Honjo A."/>
            <person name="Ikemoto K."/>
            <person name="Inada T."/>
            <person name="Itoh T."/>
            <person name="Kajihara M."/>
            <person name="Kanai K."/>
            <person name="Kashimoto K."/>
            <person name="Kimura S."/>
            <person name="Kitagawa M."/>
            <person name="Makino K."/>
            <person name="Masuda S."/>
            <person name="Miki T."/>
            <person name="Mizobuchi K."/>
            <person name="Mori H."/>
            <person name="Motomura K."/>
            <person name="Nakamura Y."/>
            <person name="Nashimoto H."/>
            <person name="Nishio Y."/>
            <person name="Saito N."/>
            <person name="Sampei G."/>
            <person name="Seki Y."/>
            <person name="Tagami H."/>
            <person name="Takemoto K."/>
            <person name="Wada C."/>
            <person name="Yamamoto Y."/>
            <person name="Yano M."/>
            <person name="Horiuchi T."/>
        </authorList>
    </citation>
    <scope>NUCLEOTIDE SEQUENCE [LARGE SCALE GENOMIC DNA]</scope>
    <source>
        <strain>K12 / W3110 / ATCC 27325 / DSM 5911</strain>
    </source>
</reference>
<reference key="2">
    <citation type="journal article" date="1997" name="Science">
        <title>The complete genome sequence of Escherichia coli K-12.</title>
        <authorList>
            <person name="Blattner F.R."/>
            <person name="Plunkett G. III"/>
            <person name="Bloch C.A."/>
            <person name="Perna N.T."/>
            <person name="Burland V."/>
            <person name="Riley M."/>
            <person name="Collado-Vides J."/>
            <person name="Glasner J.D."/>
            <person name="Rode C.K."/>
            <person name="Mayhew G.F."/>
            <person name="Gregor J."/>
            <person name="Davis N.W."/>
            <person name="Kirkpatrick H.A."/>
            <person name="Goeden M.A."/>
            <person name="Rose D.J."/>
            <person name="Mau B."/>
            <person name="Shao Y."/>
        </authorList>
    </citation>
    <scope>NUCLEOTIDE SEQUENCE [LARGE SCALE GENOMIC DNA]</scope>
    <source>
        <strain>K12 / MG1655 / ATCC 47076</strain>
    </source>
</reference>
<reference key="3">
    <citation type="journal article" date="2006" name="Mol. Syst. Biol.">
        <title>Highly accurate genome sequences of Escherichia coli K-12 strains MG1655 and W3110.</title>
        <authorList>
            <person name="Hayashi K."/>
            <person name="Morooka N."/>
            <person name="Yamamoto Y."/>
            <person name="Fujita K."/>
            <person name="Isono K."/>
            <person name="Choi S."/>
            <person name="Ohtsubo E."/>
            <person name="Baba T."/>
            <person name="Wanner B.L."/>
            <person name="Mori H."/>
            <person name="Horiuchi T."/>
        </authorList>
    </citation>
    <scope>NUCLEOTIDE SEQUENCE [LARGE SCALE GENOMIC DNA]</scope>
    <source>
        <strain>K12 / W3110 / ATCC 27325 / DSM 5911</strain>
    </source>
</reference>
<reference key="4">
    <citation type="journal article" date="2005" name="Science">
        <title>Global topology analysis of the Escherichia coli inner membrane proteome.</title>
        <authorList>
            <person name="Daley D.O."/>
            <person name="Rapp M."/>
            <person name="Granseth E."/>
            <person name="Melen K."/>
            <person name="Drew D."/>
            <person name="von Heijne G."/>
        </authorList>
    </citation>
    <scope>TOPOLOGY [LARGE SCALE ANALYSIS]</scope>
    <source>
        <strain>K12 / MG1655 / ATCC 47076</strain>
    </source>
</reference>
<protein>
    <recommendedName>
        <fullName>Inner membrane protein YcfZ</fullName>
    </recommendedName>
</protein>